<comment type="function">
    <text evidence="5">Odorant receptor.</text>
</comment>
<comment type="subcellular location">
    <subcellularLocation>
        <location>Cell membrane</location>
        <topology>Multi-pass membrane protein</topology>
    </subcellularLocation>
</comment>
<comment type="similarity">
    <text evidence="2">Belongs to the G-protein coupled receptor 1 family.</text>
</comment>
<comment type="caution">
    <text evidence="5">It is uncertain whether Met-1 or Met-51 is the initiator.</text>
</comment>
<comment type="sequence caution" evidence="5">
    <conflict type="erroneous initiation">
        <sequence resource="EMBL-CDS" id="BAC05743"/>
    </conflict>
    <text>Truncated N-terminus.</text>
</comment>
<comment type="sequence caution" evidence="5">
    <conflict type="erroneous initiation">
        <sequence resource="EMBL-CDS" id="EAW87540"/>
    </conflict>
    <text>Truncated N-terminus.</text>
</comment>
<comment type="online information" name="Human Olfactory Receptor Data Exploratorium (HORDE)">
    <link uri="http://genome.weizmann.ac.il/horde/card/index/symbol:OR1L1"/>
</comment>
<gene>
    <name type="primary">OR1L1</name>
    <name type="synonym">OR1L2</name>
</gene>
<name>OR1L1_HUMAN</name>
<protein>
    <recommendedName>
        <fullName>Olfactory receptor 1L1</fullName>
    </recommendedName>
    <alternativeName>
        <fullName>Olfactory receptor 1L2</fullName>
    </alternativeName>
    <alternativeName>
        <fullName>Olfactory receptor 9-C</fullName>
        <shortName>OR9-C</shortName>
    </alternativeName>
    <alternativeName>
        <fullName>Olfactory receptor OR9-27</fullName>
    </alternativeName>
</protein>
<evidence type="ECO:0000255" key="1"/>
<evidence type="ECO:0000255" key="2">
    <source>
        <dbReference type="PROSITE-ProRule" id="PRU00521"/>
    </source>
</evidence>
<evidence type="ECO:0000269" key="3">
    <source>
    </source>
</evidence>
<evidence type="ECO:0000269" key="4">
    <source ref="1"/>
</evidence>
<evidence type="ECO:0000305" key="5"/>
<sequence>MERNHNPDNCNVLNFFFADKKNKRRNFGQIVSDVGRICYSVSLSLGEPTTMGRNNLTRPSEFILLGLSSRPEDQKPLFAVFLPIYLITVIGNLLIILAIRSDTRLQTPMYFFLSILSFVDICYVTVIIPKMLVNFLSETKTISYSECLTQMYFFLAFGNTDSYLLAAMAIDRYVAICNPFHYITIMSHRCCVLLLVLSFCIPHFHSLLHILLTNQLIFCASNVIHHFFCDDQPVLKLSCSSHFVKEITVMTEGLAVIMTPFSCIIISYLRILITVLKIPSAAGKRKAFSTCGSHLTVVTLFYGSISYLYFQPLSNYTVKDQIATIIYTVLTPMLNPFIYSLRNKDMKQGLAKLMHRMKCQ</sequence>
<proteinExistence type="inferred from homology"/>
<keyword id="KW-1003">Cell membrane</keyword>
<keyword id="KW-1015">Disulfide bond</keyword>
<keyword id="KW-0297">G-protein coupled receptor</keyword>
<keyword id="KW-0325">Glycoprotein</keyword>
<keyword id="KW-0472">Membrane</keyword>
<keyword id="KW-0552">Olfaction</keyword>
<keyword id="KW-0675">Receptor</keyword>
<keyword id="KW-1185">Reference proteome</keyword>
<keyword id="KW-0716">Sensory transduction</keyword>
<keyword id="KW-0807">Transducer</keyword>
<keyword id="KW-0812">Transmembrane</keyword>
<keyword id="KW-1133">Transmembrane helix</keyword>
<dbReference type="EMBL" id="AB065491">
    <property type="protein sequence ID" value="BAC05743.1"/>
    <property type="status" value="ALT_INIT"/>
    <property type="molecule type" value="Genomic_DNA"/>
</dbReference>
<dbReference type="EMBL" id="AL162254">
    <property type="status" value="NOT_ANNOTATED_CDS"/>
    <property type="molecule type" value="Genomic_DNA"/>
</dbReference>
<dbReference type="EMBL" id="CH471090">
    <property type="protein sequence ID" value="EAW87540.1"/>
    <property type="status" value="ALT_INIT"/>
    <property type="molecule type" value="Genomic_DNA"/>
</dbReference>
<dbReference type="EMBL" id="BK004230">
    <property type="protein sequence ID" value="DAA04628.1"/>
    <property type="molecule type" value="Genomic_DNA"/>
</dbReference>
<dbReference type="RefSeq" id="NP_001005236.3">
    <property type="nucleotide sequence ID" value="NM_001005236.3"/>
</dbReference>
<dbReference type="SMR" id="Q8NH94"/>
<dbReference type="FunCoup" id="Q8NH94">
    <property type="interactions" value="451"/>
</dbReference>
<dbReference type="STRING" id="9606.ENSP00000310773"/>
<dbReference type="GlyCosmos" id="Q8NH94">
    <property type="glycosylation" value="2 sites, No reported glycans"/>
</dbReference>
<dbReference type="GlyGen" id="Q8NH94">
    <property type="glycosylation" value="2 sites"/>
</dbReference>
<dbReference type="iPTMnet" id="Q8NH94"/>
<dbReference type="PhosphoSitePlus" id="Q8NH94"/>
<dbReference type="BioMuta" id="OR1L1"/>
<dbReference type="DMDM" id="229462947"/>
<dbReference type="MassIVE" id="Q8NH94"/>
<dbReference type="PaxDb" id="9606-ENSP00000310773"/>
<dbReference type="Antibodypedia" id="66869">
    <property type="antibodies" value="23 antibodies from 12 providers"/>
</dbReference>
<dbReference type="DNASU" id="26737"/>
<dbReference type="Ensembl" id="ENST00000373686.1">
    <property type="protein sequence ID" value="ENSP00000362790.1"/>
    <property type="gene ID" value="ENSG00000173679.2"/>
</dbReference>
<dbReference type="GeneID" id="26737"/>
<dbReference type="KEGG" id="hsa:26737"/>
<dbReference type="UCSC" id="uc064vng.1">
    <property type="organism name" value="human"/>
</dbReference>
<dbReference type="AGR" id="HGNC:8213"/>
<dbReference type="CTD" id="26737"/>
<dbReference type="GeneCards" id="OR1L1"/>
<dbReference type="HGNC" id="HGNC:8213">
    <property type="gene designation" value="OR1L1"/>
</dbReference>
<dbReference type="HPA" id="ENSG00000173679">
    <property type="expression patterns" value="Not detected"/>
</dbReference>
<dbReference type="neXtProt" id="NX_Q8NH94"/>
<dbReference type="PharmGKB" id="PA32084"/>
<dbReference type="VEuPathDB" id="HostDB:ENSG00000173679"/>
<dbReference type="eggNOG" id="ENOG502T9M9">
    <property type="taxonomic scope" value="Eukaryota"/>
</dbReference>
<dbReference type="GeneTree" id="ENSGT00940000164453"/>
<dbReference type="InParanoid" id="Q8NH94"/>
<dbReference type="OrthoDB" id="8772365at2759"/>
<dbReference type="PAN-GO" id="Q8NH94">
    <property type="GO annotations" value="3 GO annotations based on evolutionary models"/>
</dbReference>
<dbReference type="PhylomeDB" id="Q8NH94"/>
<dbReference type="PathwayCommons" id="Q8NH94"/>
<dbReference type="Reactome" id="R-HSA-9752946">
    <property type="pathway name" value="Expression and translocation of olfactory receptors"/>
</dbReference>
<dbReference type="BioGRID-ORCS" id="26737">
    <property type="hits" value="13 hits in 738 CRISPR screens"/>
</dbReference>
<dbReference type="GeneWiki" id="OR1L1"/>
<dbReference type="GenomeRNAi" id="26737"/>
<dbReference type="Pharos" id="Q8NH94">
    <property type="development level" value="Tdark"/>
</dbReference>
<dbReference type="PRO" id="PR:Q8NH94"/>
<dbReference type="Proteomes" id="UP000005640">
    <property type="component" value="Chromosome 9"/>
</dbReference>
<dbReference type="RNAct" id="Q8NH94">
    <property type="molecule type" value="protein"/>
</dbReference>
<dbReference type="Bgee" id="ENSG00000173679">
    <property type="expression patterns" value="Expressed in male germ line stem cell (sensu Vertebrata) in testis and 2 other cell types or tissues"/>
</dbReference>
<dbReference type="ExpressionAtlas" id="Q8NH94">
    <property type="expression patterns" value="baseline and differential"/>
</dbReference>
<dbReference type="GO" id="GO:0005886">
    <property type="term" value="C:plasma membrane"/>
    <property type="evidence" value="ECO:0000318"/>
    <property type="project" value="GO_Central"/>
</dbReference>
<dbReference type="GO" id="GO:0004930">
    <property type="term" value="F:G protein-coupled receptor activity"/>
    <property type="evidence" value="ECO:0007669"/>
    <property type="project" value="UniProtKB-KW"/>
</dbReference>
<dbReference type="GO" id="GO:0004984">
    <property type="term" value="F:olfactory receptor activity"/>
    <property type="evidence" value="ECO:0000318"/>
    <property type="project" value="GO_Central"/>
</dbReference>
<dbReference type="GO" id="GO:0007165">
    <property type="term" value="P:signal transduction"/>
    <property type="evidence" value="ECO:0000318"/>
    <property type="project" value="GO_Central"/>
</dbReference>
<dbReference type="CDD" id="cd15235">
    <property type="entry name" value="7tmA_OR1A-like"/>
    <property type="match status" value="1"/>
</dbReference>
<dbReference type="FunFam" id="1.20.1070.10:FF:000009">
    <property type="entry name" value="Olfactory receptor"/>
    <property type="match status" value="1"/>
</dbReference>
<dbReference type="Gene3D" id="1.20.1070.10">
    <property type="entry name" value="Rhodopsin 7-helix transmembrane proteins"/>
    <property type="match status" value="1"/>
</dbReference>
<dbReference type="InterPro" id="IPR000276">
    <property type="entry name" value="GPCR_Rhodpsn"/>
</dbReference>
<dbReference type="InterPro" id="IPR017452">
    <property type="entry name" value="GPCR_Rhodpsn_7TM"/>
</dbReference>
<dbReference type="InterPro" id="IPR000725">
    <property type="entry name" value="Olfact_rcpt"/>
</dbReference>
<dbReference type="PANTHER" id="PTHR48001">
    <property type="entry name" value="OLFACTORY RECEPTOR"/>
    <property type="match status" value="1"/>
</dbReference>
<dbReference type="Pfam" id="PF13853">
    <property type="entry name" value="7tm_4"/>
    <property type="match status" value="1"/>
</dbReference>
<dbReference type="PRINTS" id="PR00237">
    <property type="entry name" value="GPCRRHODOPSN"/>
</dbReference>
<dbReference type="PRINTS" id="PR00245">
    <property type="entry name" value="OLFACTORYR"/>
</dbReference>
<dbReference type="SUPFAM" id="SSF81321">
    <property type="entry name" value="Family A G protein-coupled receptor-like"/>
    <property type="match status" value="1"/>
</dbReference>
<dbReference type="PROSITE" id="PS00237">
    <property type="entry name" value="G_PROTEIN_RECEP_F1_1"/>
    <property type="match status" value="1"/>
</dbReference>
<dbReference type="PROSITE" id="PS50262">
    <property type="entry name" value="G_PROTEIN_RECEP_F1_2"/>
    <property type="match status" value="1"/>
</dbReference>
<feature type="chain" id="PRO_0000150442" description="Olfactory receptor 1L1">
    <location>
        <begin position="1"/>
        <end position="360"/>
    </location>
</feature>
<feature type="topological domain" description="Extracellular" evidence="1">
    <location>
        <begin position="1"/>
        <end position="75"/>
    </location>
</feature>
<feature type="transmembrane region" description="Helical; Name=1" evidence="1">
    <location>
        <begin position="76"/>
        <end position="99"/>
    </location>
</feature>
<feature type="topological domain" description="Cytoplasmic" evidence="1">
    <location>
        <begin position="100"/>
        <end position="107"/>
    </location>
</feature>
<feature type="transmembrane region" description="Helical; Name=2" evidence="1">
    <location>
        <begin position="108"/>
        <end position="129"/>
    </location>
</feature>
<feature type="topological domain" description="Extracellular" evidence="1">
    <location>
        <begin position="130"/>
        <end position="150"/>
    </location>
</feature>
<feature type="transmembrane region" description="Helical; Name=3" evidence="1">
    <location>
        <begin position="151"/>
        <end position="170"/>
    </location>
</feature>
<feature type="topological domain" description="Cytoplasmic" evidence="1">
    <location>
        <begin position="171"/>
        <end position="189"/>
    </location>
</feature>
<feature type="transmembrane region" description="Helical; Name=4" evidence="1">
    <location>
        <begin position="190"/>
        <end position="208"/>
    </location>
</feature>
<feature type="topological domain" description="Extracellular" evidence="1">
    <location>
        <begin position="209"/>
        <end position="246"/>
    </location>
</feature>
<feature type="transmembrane region" description="Helical; Name=5" evidence="1">
    <location>
        <begin position="247"/>
        <end position="269"/>
    </location>
</feature>
<feature type="topological domain" description="Cytoplasmic" evidence="1">
    <location>
        <begin position="270"/>
        <end position="286"/>
    </location>
</feature>
<feature type="transmembrane region" description="Helical; Name=6" evidence="1">
    <location>
        <begin position="287"/>
        <end position="309"/>
    </location>
</feature>
<feature type="topological domain" description="Extracellular" evidence="1">
    <location>
        <begin position="310"/>
        <end position="321"/>
    </location>
</feature>
<feature type="transmembrane region" description="Helical; Name=7" evidence="1">
    <location>
        <begin position="322"/>
        <end position="341"/>
    </location>
</feature>
<feature type="topological domain" description="Cytoplasmic" evidence="1">
    <location>
        <begin position="342"/>
        <end position="360"/>
    </location>
</feature>
<feature type="glycosylation site" description="N-linked (GlcNAc...) asparagine" evidence="1">
    <location>
        <position position="55"/>
    </location>
</feature>
<feature type="glycosylation site" description="N-linked (GlcNAc...) asparagine" evidence="1">
    <location>
        <position position="315"/>
    </location>
</feature>
<feature type="disulfide bond" evidence="2">
    <location>
        <begin position="147"/>
        <end position="239"/>
    </location>
</feature>
<feature type="sequence variant" id="VAR_047141" description="In dbSNP:rs70157." evidence="3 4">
    <original>S</original>
    <variation>G</variation>
    <location>
        <position position="145"/>
    </location>
</feature>
<feature type="sequence variant" id="VAR_047142" description="In dbSNP:rs16912055.">
    <original>T</original>
    <variation>A</variation>
    <location>
        <position position="149"/>
    </location>
</feature>
<feature type="sequence variant" id="VAR_047143" description="In dbSNP:rs237620." evidence="3 4">
    <original>L</original>
    <variation>V</variation>
    <location>
        <position position="308"/>
    </location>
</feature>
<feature type="sequence variant" id="VAR_047144" description="In dbSNP:rs16912062.">
    <original>G</original>
    <variation>R</variation>
    <location>
        <position position="349"/>
    </location>
</feature>
<reference key="1">
    <citation type="submission" date="2001-07" db="EMBL/GenBank/DDBJ databases">
        <title>Genome-wide discovery and analysis of human seven transmembrane helix receptor genes.</title>
        <authorList>
            <person name="Suwa M."/>
            <person name="Sato T."/>
            <person name="Okouchi I."/>
            <person name="Arita M."/>
            <person name="Futami K."/>
            <person name="Matsumoto S."/>
            <person name="Tsutsumi S."/>
            <person name="Aburatani H."/>
            <person name="Asai K."/>
            <person name="Akiyama Y."/>
        </authorList>
    </citation>
    <scope>NUCLEOTIDE SEQUENCE [GENOMIC DNA]</scope>
    <scope>VARIANTS GLY-145 AND VAL-308</scope>
</reference>
<reference key="2">
    <citation type="journal article" date="2004" name="Nature">
        <title>DNA sequence and analysis of human chromosome 9.</title>
        <authorList>
            <person name="Humphray S.J."/>
            <person name="Oliver K."/>
            <person name="Hunt A.R."/>
            <person name="Plumb R.W."/>
            <person name="Loveland J.E."/>
            <person name="Howe K.L."/>
            <person name="Andrews T.D."/>
            <person name="Searle S."/>
            <person name="Hunt S.E."/>
            <person name="Scott C.E."/>
            <person name="Jones M.C."/>
            <person name="Ainscough R."/>
            <person name="Almeida J.P."/>
            <person name="Ambrose K.D."/>
            <person name="Ashwell R.I.S."/>
            <person name="Babbage A.K."/>
            <person name="Babbage S."/>
            <person name="Bagguley C.L."/>
            <person name="Bailey J."/>
            <person name="Banerjee R."/>
            <person name="Barker D.J."/>
            <person name="Barlow K.F."/>
            <person name="Bates K."/>
            <person name="Beasley H."/>
            <person name="Beasley O."/>
            <person name="Bird C.P."/>
            <person name="Bray-Allen S."/>
            <person name="Brown A.J."/>
            <person name="Brown J.Y."/>
            <person name="Burford D."/>
            <person name="Burrill W."/>
            <person name="Burton J."/>
            <person name="Carder C."/>
            <person name="Carter N.P."/>
            <person name="Chapman J.C."/>
            <person name="Chen Y."/>
            <person name="Clarke G."/>
            <person name="Clark S.Y."/>
            <person name="Clee C.M."/>
            <person name="Clegg S."/>
            <person name="Collier R.E."/>
            <person name="Corby N."/>
            <person name="Crosier M."/>
            <person name="Cummings A.T."/>
            <person name="Davies J."/>
            <person name="Dhami P."/>
            <person name="Dunn M."/>
            <person name="Dutta I."/>
            <person name="Dyer L.W."/>
            <person name="Earthrowl M.E."/>
            <person name="Faulkner L."/>
            <person name="Fleming C.J."/>
            <person name="Frankish A."/>
            <person name="Frankland J.A."/>
            <person name="French L."/>
            <person name="Fricker D.G."/>
            <person name="Garner P."/>
            <person name="Garnett J."/>
            <person name="Ghori J."/>
            <person name="Gilbert J.G.R."/>
            <person name="Glison C."/>
            <person name="Grafham D.V."/>
            <person name="Gribble S."/>
            <person name="Griffiths C."/>
            <person name="Griffiths-Jones S."/>
            <person name="Grocock R."/>
            <person name="Guy J."/>
            <person name="Hall R.E."/>
            <person name="Hammond S."/>
            <person name="Harley J.L."/>
            <person name="Harrison E.S.I."/>
            <person name="Hart E.A."/>
            <person name="Heath P.D."/>
            <person name="Henderson C.D."/>
            <person name="Hopkins B.L."/>
            <person name="Howard P.J."/>
            <person name="Howden P.J."/>
            <person name="Huckle E."/>
            <person name="Johnson C."/>
            <person name="Johnson D."/>
            <person name="Joy A.A."/>
            <person name="Kay M."/>
            <person name="Keenan S."/>
            <person name="Kershaw J.K."/>
            <person name="Kimberley A.M."/>
            <person name="King A."/>
            <person name="Knights A."/>
            <person name="Laird G.K."/>
            <person name="Langford C."/>
            <person name="Lawlor S."/>
            <person name="Leongamornlert D.A."/>
            <person name="Leversha M."/>
            <person name="Lloyd C."/>
            <person name="Lloyd D.M."/>
            <person name="Lovell J."/>
            <person name="Martin S."/>
            <person name="Mashreghi-Mohammadi M."/>
            <person name="Matthews L."/>
            <person name="McLaren S."/>
            <person name="McLay K.E."/>
            <person name="McMurray A."/>
            <person name="Milne S."/>
            <person name="Nickerson T."/>
            <person name="Nisbett J."/>
            <person name="Nordsiek G."/>
            <person name="Pearce A.V."/>
            <person name="Peck A.I."/>
            <person name="Porter K.M."/>
            <person name="Pandian R."/>
            <person name="Pelan S."/>
            <person name="Phillimore B."/>
            <person name="Povey S."/>
            <person name="Ramsey Y."/>
            <person name="Rand V."/>
            <person name="Scharfe M."/>
            <person name="Sehra H.K."/>
            <person name="Shownkeen R."/>
            <person name="Sims S.K."/>
            <person name="Skuce C.D."/>
            <person name="Smith M."/>
            <person name="Steward C.A."/>
            <person name="Swarbreck D."/>
            <person name="Sycamore N."/>
            <person name="Tester J."/>
            <person name="Thorpe A."/>
            <person name="Tracey A."/>
            <person name="Tromans A."/>
            <person name="Thomas D.W."/>
            <person name="Wall M."/>
            <person name="Wallis J.M."/>
            <person name="West A.P."/>
            <person name="Whitehead S.L."/>
            <person name="Willey D.L."/>
            <person name="Williams S.A."/>
            <person name="Wilming L."/>
            <person name="Wray P.W."/>
            <person name="Young L."/>
            <person name="Ashurst J.L."/>
            <person name="Coulson A."/>
            <person name="Blocker H."/>
            <person name="Durbin R.M."/>
            <person name="Sulston J.E."/>
            <person name="Hubbard T."/>
            <person name="Jackson M.J."/>
            <person name="Bentley D.R."/>
            <person name="Beck S."/>
            <person name="Rogers J."/>
            <person name="Dunham I."/>
        </authorList>
    </citation>
    <scope>NUCLEOTIDE SEQUENCE [LARGE SCALE GENOMIC DNA]</scope>
</reference>
<reference key="3">
    <citation type="submission" date="2005-07" db="EMBL/GenBank/DDBJ databases">
        <authorList>
            <person name="Mural R.J."/>
            <person name="Istrail S."/>
            <person name="Sutton G.G."/>
            <person name="Florea L."/>
            <person name="Halpern A.L."/>
            <person name="Mobarry C.M."/>
            <person name="Lippert R."/>
            <person name="Walenz B."/>
            <person name="Shatkay H."/>
            <person name="Dew I."/>
            <person name="Miller J.R."/>
            <person name="Flanigan M.J."/>
            <person name="Edwards N.J."/>
            <person name="Bolanos R."/>
            <person name="Fasulo D."/>
            <person name="Halldorsson B.V."/>
            <person name="Hannenhalli S."/>
            <person name="Turner R."/>
            <person name="Yooseph S."/>
            <person name="Lu F."/>
            <person name="Nusskern D.R."/>
            <person name="Shue B.C."/>
            <person name="Zheng X.H."/>
            <person name="Zhong F."/>
            <person name="Delcher A.L."/>
            <person name="Huson D.H."/>
            <person name="Kravitz S.A."/>
            <person name="Mouchard L."/>
            <person name="Reinert K."/>
            <person name="Remington K.A."/>
            <person name="Clark A.G."/>
            <person name="Waterman M.S."/>
            <person name="Eichler E.E."/>
            <person name="Adams M.D."/>
            <person name="Hunkapiller M.W."/>
            <person name="Myers E.W."/>
            <person name="Venter J.C."/>
        </authorList>
    </citation>
    <scope>NUCLEOTIDE SEQUENCE [LARGE SCALE GENOMIC DNA]</scope>
</reference>
<reference key="4">
    <citation type="journal article" date="2004" name="Proc. Natl. Acad. Sci. U.S.A.">
        <title>The human olfactory receptor gene family.</title>
        <authorList>
            <person name="Malnic B."/>
            <person name="Godfrey P.A."/>
            <person name="Buck L.B."/>
        </authorList>
    </citation>
    <scope>IDENTIFICATION</scope>
    <scope>VARIANTS GLY-145 AND VAL-308</scope>
</reference>
<reference key="5">
    <citation type="journal article" date="2004" name="Proc. Natl. Acad. Sci. U.S.A.">
        <authorList>
            <person name="Malnic B."/>
            <person name="Godfrey P.A."/>
            <person name="Buck L.B."/>
        </authorList>
    </citation>
    <scope>ERRATUM OF PUBMED:14983052</scope>
</reference>
<organism>
    <name type="scientific">Homo sapiens</name>
    <name type="common">Human</name>
    <dbReference type="NCBI Taxonomy" id="9606"/>
    <lineage>
        <taxon>Eukaryota</taxon>
        <taxon>Metazoa</taxon>
        <taxon>Chordata</taxon>
        <taxon>Craniata</taxon>
        <taxon>Vertebrata</taxon>
        <taxon>Euteleostomi</taxon>
        <taxon>Mammalia</taxon>
        <taxon>Eutheria</taxon>
        <taxon>Euarchontoglires</taxon>
        <taxon>Primates</taxon>
        <taxon>Haplorrhini</taxon>
        <taxon>Catarrhini</taxon>
        <taxon>Hominidae</taxon>
        <taxon>Homo</taxon>
    </lineage>
</organism>
<accession>Q8NH94</accession>
<accession>Q5T7Z3</accession>
<accession>Q6IFN2</accession>